<name>TRPC_ECOLI</name>
<organism>
    <name type="scientific">Escherichia coli (strain K12)</name>
    <dbReference type="NCBI Taxonomy" id="83333"/>
    <lineage>
        <taxon>Bacteria</taxon>
        <taxon>Pseudomonadati</taxon>
        <taxon>Pseudomonadota</taxon>
        <taxon>Gammaproteobacteria</taxon>
        <taxon>Enterobacterales</taxon>
        <taxon>Enterobacteriaceae</taxon>
        <taxon>Escherichia</taxon>
    </lineage>
</organism>
<dbReference type="EC" id="4.1.1.48"/>
<dbReference type="EC" id="5.3.1.24"/>
<dbReference type="EMBL" id="V00366">
    <property type="protein sequence ID" value="CAA23664.1"/>
    <property type="molecule type" value="Genomic_DNA"/>
</dbReference>
<dbReference type="EMBL" id="V00372">
    <property type="protein sequence ID" value="CAA23673.1"/>
    <property type="molecule type" value="Genomic_DNA"/>
</dbReference>
<dbReference type="EMBL" id="J01714">
    <property type="protein sequence ID" value="AAA57299.1"/>
    <property type="molecule type" value="Genomic_DNA"/>
</dbReference>
<dbReference type="EMBL" id="U23489">
    <property type="protein sequence ID" value="AAB60033.1"/>
    <property type="molecule type" value="Genomic_DNA"/>
</dbReference>
<dbReference type="EMBL" id="U00096">
    <property type="protein sequence ID" value="AAC74344.3"/>
    <property type="molecule type" value="Genomic_DNA"/>
</dbReference>
<dbReference type="EMBL" id="AP009048">
    <property type="protein sequence ID" value="BAA14794.1"/>
    <property type="molecule type" value="Genomic_DNA"/>
</dbReference>
<dbReference type="PIR" id="A64874">
    <property type="entry name" value="GWEC"/>
</dbReference>
<dbReference type="RefSeq" id="NP_415778.3">
    <property type="nucleotide sequence ID" value="NC_000913.3"/>
</dbReference>
<dbReference type="PDB" id="1JCM">
    <property type="method" value="X-ray"/>
    <property type="resolution" value="2.10 A"/>
    <property type="chains" value="P=2-260"/>
</dbReference>
<dbReference type="PDB" id="1PII">
    <property type="method" value="X-ray"/>
    <property type="resolution" value="2.00 A"/>
    <property type="chains" value="A=2-453"/>
</dbReference>
<dbReference type="PDB" id="2KZH">
    <property type="method" value="NMR"/>
    <property type="chains" value="A=256-385"/>
</dbReference>
<dbReference type="PDBsum" id="1JCM"/>
<dbReference type="PDBsum" id="1PII"/>
<dbReference type="PDBsum" id="2KZH"/>
<dbReference type="BMRB" id="P00909"/>
<dbReference type="SMR" id="P00909"/>
<dbReference type="BioGRID" id="4260122">
    <property type="interactions" value="6"/>
</dbReference>
<dbReference type="BioGRID" id="849893">
    <property type="interactions" value="4"/>
</dbReference>
<dbReference type="FunCoup" id="P00909">
    <property type="interactions" value="497"/>
</dbReference>
<dbReference type="IntAct" id="P00909">
    <property type="interactions" value="7"/>
</dbReference>
<dbReference type="STRING" id="511145.b1262"/>
<dbReference type="DrugBank" id="DB03543">
    <property type="generic name" value="1-(O-Carboxy-Phenylamino)-1-Deoxy-D-Ribulose-5-Phosphate"/>
</dbReference>
<dbReference type="jPOST" id="P00909"/>
<dbReference type="PaxDb" id="511145-b1262"/>
<dbReference type="EnsemblBacteria" id="AAC74344">
    <property type="protein sequence ID" value="AAC74344"/>
    <property type="gene ID" value="b1262"/>
</dbReference>
<dbReference type="GeneID" id="945519"/>
<dbReference type="KEGG" id="ecj:JW1254"/>
<dbReference type="KEGG" id="eco:b1262"/>
<dbReference type="PATRIC" id="fig|511145.12.peg.1312"/>
<dbReference type="EchoBASE" id="EB1019"/>
<dbReference type="eggNOG" id="COG0134">
    <property type="taxonomic scope" value="Bacteria"/>
</dbReference>
<dbReference type="eggNOG" id="COG0135">
    <property type="taxonomic scope" value="Bacteria"/>
</dbReference>
<dbReference type="HOGENOM" id="CLU_007713_1_2_6"/>
<dbReference type="InParanoid" id="P00909"/>
<dbReference type="BioCyc" id="EcoCyc:PRAI-IGPS"/>
<dbReference type="BioCyc" id="MetaCyc:PRAI-IGPS"/>
<dbReference type="BRENDA" id="5.3.1.24">
    <property type="organism ID" value="2026"/>
</dbReference>
<dbReference type="SABIO-RK" id="P00909"/>
<dbReference type="UniPathway" id="UPA00035">
    <property type="reaction ID" value="UER00042"/>
</dbReference>
<dbReference type="UniPathway" id="UPA00035">
    <property type="reaction ID" value="UER00043"/>
</dbReference>
<dbReference type="EvolutionaryTrace" id="P00909"/>
<dbReference type="PRO" id="PR:P00909"/>
<dbReference type="Proteomes" id="UP000000625">
    <property type="component" value="Chromosome"/>
</dbReference>
<dbReference type="GO" id="GO:0004425">
    <property type="term" value="F:indole-3-glycerol-phosphate synthase activity"/>
    <property type="evidence" value="ECO:0000314"/>
    <property type="project" value="EcoCyc"/>
</dbReference>
<dbReference type="GO" id="GO:0004640">
    <property type="term" value="F:phosphoribosylanthranilate isomerase activity"/>
    <property type="evidence" value="ECO:0000314"/>
    <property type="project" value="EcoCyc"/>
</dbReference>
<dbReference type="GO" id="GO:0000162">
    <property type="term" value="P:L-tryptophan biosynthetic process"/>
    <property type="evidence" value="ECO:0000315"/>
    <property type="project" value="EcoCyc"/>
</dbReference>
<dbReference type="CDD" id="cd00331">
    <property type="entry name" value="IGPS"/>
    <property type="match status" value="1"/>
</dbReference>
<dbReference type="CDD" id="cd00405">
    <property type="entry name" value="PRAI"/>
    <property type="match status" value="1"/>
</dbReference>
<dbReference type="FunFam" id="3.20.20.70:FF:000024">
    <property type="entry name" value="Indole-3-glycerol phosphate synthase"/>
    <property type="match status" value="1"/>
</dbReference>
<dbReference type="FunFam" id="3.20.20.70:FF:000165">
    <property type="entry name" value="Multifunctional fusion protein"/>
    <property type="match status" value="1"/>
</dbReference>
<dbReference type="Gene3D" id="3.20.20.70">
    <property type="entry name" value="Aldolase class I"/>
    <property type="match status" value="2"/>
</dbReference>
<dbReference type="HAMAP" id="MF_00134_B">
    <property type="entry name" value="IGPS_B"/>
    <property type="match status" value="1"/>
</dbReference>
<dbReference type="HAMAP" id="MF_00135">
    <property type="entry name" value="PRAI"/>
    <property type="match status" value="1"/>
</dbReference>
<dbReference type="InterPro" id="IPR013785">
    <property type="entry name" value="Aldolase_TIM"/>
</dbReference>
<dbReference type="InterPro" id="IPR045186">
    <property type="entry name" value="Indole-3-glycerol_P_synth"/>
</dbReference>
<dbReference type="InterPro" id="IPR013798">
    <property type="entry name" value="Indole-3-glycerol_P_synth_dom"/>
</dbReference>
<dbReference type="InterPro" id="IPR001468">
    <property type="entry name" value="Indole-3-GlycerolPSynthase_CS"/>
</dbReference>
<dbReference type="InterPro" id="IPR001240">
    <property type="entry name" value="PRAI_dom"/>
</dbReference>
<dbReference type="InterPro" id="IPR011060">
    <property type="entry name" value="RibuloseP-bd_barrel"/>
</dbReference>
<dbReference type="NCBIfam" id="NF001377">
    <property type="entry name" value="PRK00278.2-4"/>
    <property type="match status" value="1"/>
</dbReference>
<dbReference type="NCBIfam" id="NF006945">
    <property type="entry name" value="PRK09427.1"/>
    <property type="match status" value="1"/>
</dbReference>
<dbReference type="PANTHER" id="PTHR22854:SF2">
    <property type="entry name" value="INDOLE-3-GLYCEROL-PHOSPHATE SYNTHASE"/>
    <property type="match status" value="1"/>
</dbReference>
<dbReference type="PANTHER" id="PTHR22854">
    <property type="entry name" value="TRYPTOPHAN BIOSYNTHESIS PROTEIN"/>
    <property type="match status" value="1"/>
</dbReference>
<dbReference type="Pfam" id="PF00218">
    <property type="entry name" value="IGPS"/>
    <property type="match status" value="1"/>
</dbReference>
<dbReference type="Pfam" id="PF00697">
    <property type="entry name" value="PRAI"/>
    <property type="match status" value="1"/>
</dbReference>
<dbReference type="SUPFAM" id="SSF51366">
    <property type="entry name" value="Ribulose-phoshate binding barrel"/>
    <property type="match status" value="2"/>
</dbReference>
<dbReference type="PROSITE" id="PS00614">
    <property type="entry name" value="IGPS"/>
    <property type="match status" value="1"/>
</dbReference>
<reference key="1">
    <citation type="journal article" date="1980" name="J. Mol. Biol.">
        <title>Gene structure in the tryptophan operon of Escherichia coli. Nucleotide sequence of trpC and the flanking intercistronic regions.</title>
        <authorList>
            <person name="Christie G.E."/>
            <person name="Platt T."/>
        </authorList>
    </citation>
    <scope>NUCLEOTIDE SEQUENCE [GENOMIC DNA]</scope>
</reference>
<reference key="2">
    <citation type="journal article" date="1983" name="J. Mol. Biol.">
        <title>Nucleotide sequence of the trpD and trpC genes of Salmonella typhimurium.</title>
        <authorList>
            <person name="Horowitz H."/>
            <person name="van Arsdell J."/>
            <person name="Platt T."/>
        </authorList>
    </citation>
    <scope>SEQUENCE REVISION TO 95 AND 399</scope>
</reference>
<reference key="3">
    <citation type="journal article" date="1981" name="Nucleic Acids Res.">
        <title>The complete nucleotide sequence of the tryptophan operon of Escherichia coli.</title>
        <authorList>
            <person name="Yanofsky C."/>
            <person name="Platt T."/>
            <person name="Crawford I.P."/>
            <person name="Nichols B.P."/>
            <person name="Christie G.E."/>
            <person name="Horowitz H."/>
            <person name="van Cleemput M."/>
            <person name="Wu A.M."/>
        </authorList>
    </citation>
    <scope>NUCLEOTIDE SEQUENCE [GENOMIC DNA]</scope>
</reference>
<reference key="4">
    <citation type="journal article" date="1993" name="Genetics">
        <title>Molecular evolution of the Escherichia coli chromosome. IV. Sequence comparisons.</title>
        <authorList>
            <person name="Milkman R."/>
            <person name="Bridges M.M."/>
        </authorList>
    </citation>
    <scope>NUCLEOTIDE SEQUENCE [GENOMIC DNA]</scope>
</reference>
<reference key="5">
    <citation type="journal article" date="1996" name="DNA Res.">
        <title>A 570-kb DNA sequence of the Escherichia coli K-12 genome corresponding to the 28.0-40.1 min region on the linkage map.</title>
        <authorList>
            <person name="Aiba H."/>
            <person name="Baba T."/>
            <person name="Fujita K."/>
            <person name="Hayashi K."/>
            <person name="Inada T."/>
            <person name="Isono K."/>
            <person name="Itoh T."/>
            <person name="Kasai H."/>
            <person name="Kashimoto K."/>
            <person name="Kimura S."/>
            <person name="Kitakawa M."/>
            <person name="Kitagawa M."/>
            <person name="Makino K."/>
            <person name="Miki T."/>
            <person name="Mizobuchi K."/>
            <person name="Mori H."/>
            <person name="Mori T."/>
            <person name="Motomura K."/>
            <person name="Nakade S."/>
            <person name="Nakamura Y."/>
            <person name="Nashimoto H."/>
            <person name="Nishio Y."/>
            <person name="Oshima T."/>
            <person name="Saito N."/>
            <person name="Sampei G."/>
            <person name="Seki Y."/>
            <person name="Sivasundaram S."/>
            <person name="Tagami H."/>
            <person name="Takeda J."/>
            <person name="Takemoto K."/>
            <person name="Takeuchi Y."/>
            <person name="Wada C."/>
            <person name="Yamamoto Y."/>
            <person name="Horiuchi T."/>
        </authorList>
    </citation>
    <scope>NUCLEOTIDE SEQUENCE [LARGE SCALE GENOMIC DNA]</scope>
    <source>
        <strain>K12 / W3110 / ATCC 27325 / DSM 5911</strain>
    </source>
</reference>
<reference key="6">
    <citation type="journal article" date="1997" name="Science">
        <title>The complete genome sequence of Escherichia coli K-12.</title>
        <authorList>
            <person name="Blattner F.R."/>
            <person name="Plunkett G. III"/>
            <person name="Bloch C.A."/>
            <person name="Perna N.T."/>
            <person name="Burland V."/>
            <person name="Riley M."/>
            <person name="Collado-Vides J."/>
            <person name="Glasner J.D."/>
            <person name="Rode C.K."/>
            <person name="Mayhew G.F."/>
            <person name="Gregor J."/>
            <person name="Davis N.W."/>
            <person name="Kirkpatrick H.A."/>
            <person name="Goeden M.A."/>
            <person name="Rose D.J."/>
            <person name="Mau B."/>
            <person name="Shao Y."/>
        </authorList>
    </citation>
    <scope>NUCLEOTIDE SEQUENCE [LARGE SCALE GENOMIC DNA]</scope>
    <source>
        <strain>K12 / MG1655 / ATCC 47076</strain>
    </source>
</reference>
<reference key="7">
    <citation type="journal article" date="2006" name="Mol. Syst. Biol.">
        <title>Highly accurate genome sequences of Escherichia coli K-12 strains MG1655 and W3110.</title>
        <authorList>
            <person name="Hayashi K."/>
            <person name="Morooka N."/>
            <person name="Yamamoto Y."/>
            <person name="Fujita K."/>
            <person name="Isono K."/>
            <person name="Choi S."/>
            <person name="Ohtsubo E."/>
            <person name="Baba T."/>
            <person name="Wanner B.L."/>
            <person name="Mori H."/>
            <person name="Horiuchi T."/>
        </authorList>
    </citation>
    <scope>NUCLEOTIDE SEQUENCE [LARGE SCALE GENOMIC DNA]</scope>
    <source>
        <strain>K12 / W3110 / ATCC 27325 / DSM 5911</strain>
    </source>
</reference>
<reference key="8">
    <citation type="journal article" date="2013" name="Mol. Cell. Proteomics">
        <title>Deep coverage of the Escherichia coli proteome enables the assessment of false discovery rates in simple proteogenomic experiments.</title>
        <authorList>
            <person name="Krug K."/>
            <person name="Carpy A."/>
            <person name="Behrends G."/>
            <person name="Matic K."/>
            <person name="Soares N.C."/>
            <person name="Macek B."/>
        </authorList>
    </citation>
    <scope>PROTEIN SEQUENCE OF 1-8</scope>
    <source>
        <strain>K12 / BW25113</strain>
    </source>
</reference>
<reference key="9">
    <citation type="journal article" date="1997" name="Electrophoresis">
        <title>Escherichia coli proteome analysis using the gene-protein database.</title>
        <authorList>
            <person name="VanBogelen R.A."/>
            <person name="Abshire K.Z."/>
            <person name="Moldover B."/>
            <person name="Olson E.R."/>
            <person name="Neidhardt F.C."/>
        </authorList>
    </citation>
    <scope>IDENTIFICATION BY 2D-GEL</scope>
</reference>
<reference key="10">
    <citation type="journal article" date="1992" name="J. Mol. Biol.">
        <title>Three-dimensional structure of the bifunctional enzyme phosphoribosylanthranilate isomerase: indoleglycerolphosphate synthase from Escherichia coli refined at 2.0-A resolution.</title>
        <authorList>
            <person name="Wilmanns M."/>
            <person name="Priestle J.P."/>
            <person name="Niermann T."/>
            <person name="Jansonius J.N."/>
        </authorList>
    </citation>
    <scope>X-RAY CRYSTALLOGRAPHY (2.0 ANGSTROMS)</scope>
    <scope>SEQUENCE REVISION TO 320</scope>
</reference>
<reference key="11">
    <citation type="journal article" date="1990" name="Protein Eng.">
        <title>Crystallization and structure solution at 4-A resolution of the recombinant synthase domain of N-(5'-phosphoribosyl)anthranilate isomerase:indole-3-glycerol-phosphate synthase from Escherichia coli complexed to a substrate analogue.</title>
        <authorList>
            <person name="Wilmanns M."/>
            <person name="Schlagenhauf E."/>
            <person name="Fol B."/>
            <person name="Jansonius J.N."/>
        </authorList>
    </citation>
    <scope>X-RAY CRYSTALLOGRAPHY (4.0 ANGSTROMS) OF 258-453</scope>
</reference>
<accession>P00909</accession>
<accession>P78059</accession>
<accession>P78234</accession>
<accession>P94704</accession>
<proteinExistence type="evidence at protein level"/>
<keyword id="KW-0002">3D-structure</keyword>
<keyword id="KW-0028">Amino-acid biosynthesis</keyword>
<keyword id="KW-0057">Aromatic amino acid biosynthesis</keyword>
<keyword id="KW-0210">Decarboxylase</keyword>
<keyword id="KW-0903">Direct protein sequencing</keyword>
<keyword id="KW-0413">Isomerase</keyword>
<keyword id="KW-0456">Lyase</keyword>
<keyword id="KW-0511">Multifunctional enzyme</keyword>
<keyword id="KW-1185">Reference proteome</keyword>
<keyword id="KW-0822">Tryptophan biosynthesis</keyword>
<feature type="chain" id="PRO_0000154277" description="Tryptophan biosynthesis protein TrpCF">
    <location>
        <begin position="1"/>
        <end position="453"/>
    </location>
</feature>
<feature type="region of interest" description="Indole-3-glycerol phosphate synthase">
    <location>
        <begin position="1"/>
        <end position="257"/>
    </location>
</feature>
<feature type="region of interest" description="N-(5'-phosphoribosyl)anthranilate isomerase">
    <location>
        <begin position="258"/>
        <end position="453"/>
    </location>
</feature>
<feature type="sequence conflict" description="In Ref. 3; CAA23673." evidence="1" ref="3">
    <location>
        <position position="31"/>
    </location>
</feature>
<feature type="sequence conflict" description="In Ref. 1; CAA23664/AAA57299 and 3; CAA23673." evidence="1" ref="1 3">
    <original>Q</original>
    <variation>R</variation>
    <location>
        <position position="95"/>
    </location>
</feature>
<feature type="sequence conflict" description="In Ref. 3; CAA23673." evidence="1" ref="3">
    <location>
        <position position="285"/>
    </location>
</feature>
<feature type="sequence conflict" description="In Ref. 3; CAA23673." evidence="1" ref="3">
    <original>V</original>
    <variation>D</variation>
    <location>
        <position position="294"/>
    </location>
</feature>
<feature type="sequence conflict" description="In Ref. 1; CAA23664/AAA57299 and 3; CAA23673." evidence="1" ref="1 3">
    <original>A</original>
    <variation>V</variation>
    <location>
        <position position="330"/>
    </location>
</feature>
<feature type="sequence conflict" description="In Ref. 1; CAA23664/AAA57299, 3; CAA23673 and 4; AAB60033." evidence="1" ref="1 3 4">
    <original>S</original>
    <variation>T</variation>
    <location>
        <position position="399"/>
    </location>
</feature>
<feature type="helix" evidence="2">
    <location>
        <begin position="5"/>
        <end position="23"/>
    </location>
</feature>
<feature type="helix" evidence="2">
    <location>
        <begin position="26"/>
        <end position="28"/>
    </location>
</feature>
<feature type="helix" evidence="2">
    <location>
        <begin position="30"/>
        <end position="32"/>
    </location>
</feature>
<feature type="helix" evidence="2">
    <location>
        <begin position="40"/>
        <end position="44"/>
    </location>
</feature>
<feature type="strand" evidence="2">
    <location>
        <begin position="46"/>
        <end position="48"/>
    </location>
</feature>
<feature type="strand" evidence="2">
    <location>
        <begin position="50"/>
        <end position="55"/>
    </location>
</feature>
<feature type="strand" evidence="2">
    <location>
        <begin position="57"/>
        <end position="59"/>
    </location>
</feature>
<feature type="turn" evidence="2">
    <location>
        <begin position="60"/>
        <end position="62"/>
    </location>
</feature>
<feature type="strand" evidence="2">
    <location>
        <begin position="63"/>
        <end position="65"/>
    </location>
</feature>
<feature type="helix" evidence="2">
    <location>
        <begin position="71"/>
        <end position="78"/>
    </location>
</feature>
<feature type="turn" evidence="2">
    <location>
        <begin position="79"/>
        <end position="81"/>
    </location>
</feature>
<feature type="strand" evidence="2">
    <location>
        <begin position="83"/>
        <end position="88"/>
    </location>
</feature>
<feature type="turn" evidence="2">
    <location>
        <begin position="92"/>
        <end position="94"/>
    </location>
</feature>
<feature type="helix" evidence="2">
    <location>
        <begin position="100"/>
        <end position="107"/>
    </location>
</feature>
<feature type="strand" evidence="2">
    <location>
        <begin position="112"/>
        <end position="116"/>
    </location>
</feature>
<feature type="helix" evidence="2">
    <location>
        <begin position="121"/>
        <end position="129"/>
    </location>
</feature>
<feature type="strand" evidence="2">
    <location>
        <begin position="133"/>
        <end position="138"/>
    </location>
</feature>
<feature type="turn" evidence="2">
    <location>
        <begin position="139"/>
        <end position="141"/>
    </location>
</feature>
<feature type="helix" evidence="2">
    <location>
        <begin position="144"/>
        <end position="156"/>
    </location>
</feature>
<feature type="strand" evidence="2">
    <location>
        <begin position="160"/>
        <end position="165"/>
    </location>
</feature>
<feature type="helix" evidence="2">
    <location>
        <begin position="168"/>
        <end position="176"/>
    </location>
</feature>
<feature type="strand" evidence="2">
    <location>
        <begin position="180"/>
        <end position="187"/>
    </location>
</feature>
<feature type="turn" evidence="2">
    <location>
        <begin position="189"/>
        <end position="191"/>
    </location>
</feature>
<feature type="helix" evidence="2">
    <location>
        <begin position="197"/>
        <end position="206"/>
    </location>
</feature>
<feature type="strand" evidence="2">
    <location>
        <begin position="210"/>
        <end position="216"/>
    </location>
</feature>
<feature type="helix" evidence="2">
    <location>
        <begin position="221"/>
        <end position="227"/>
    </location>
</feature>
<feature type="turn" evidence="2">
    <location>
        <begin position="228"/>
        <end position="230"/>
    </location>
</feature>
<feature type="strand" evidence="2">
    <location>
        <begin position="232"/>
        <end position="236"/>
    </location>
</feature>
<feature type="helix" evidence="2">
    <location>
        <begin position="238"/>
        <end position="241"/>
    </location>
</feature>
<feature type="helix" evidence="2">
    <location>
        <begin position="246"/>
        <end position="255"/>
    </location>
</feature>
<feature type="helix" evidence="2">
    <location>
        <begin position="266"/>
        <end position="275"/>
    </location>
</feature>
<feature type="strand" evidence="2">
    <location>
        <begin position="278"/>
        <end position="283"/>
    </location>
</feature>
<feature type="helix" evidence="2">
    <location>
        <begin position="294"/>
        <end position="303"/>
    </location>
</feature>
<feature type="strand" evidence="2">
    <location>
        <begin position="307"/>
        <end position="314"/>
    </location>
</feature>
<feature type="helix" evidence="2">
    <location>
        <begin position="317"/>
        <end position="327"/>
    </location>
</feature>
<feature type="strand" evidence="2">
    <location>
        <begin position="330"/>
        <end position="334"/>
    </location>
</feature>
<feature type="helix" evidence="3">
    <location>
        <begin position="336"/>
        <end position="338"/>
    </location>
</feature>
<feature type="helix" evidence="2">
    <location>
        <begin position="340"/>
        <end position="349"/>
    </location>
</feature>
<feature type="strand" evidence="2">
    <location>
        <begin position="354"/>
        <end position="361"/>
    </location>
</feature>
<feature type="strand" evidence="2">
    <location>
        <begin position="363"/>
        <end position="365"/>
    </location>
</feature>
<feature type="strand" evidence="2">
    <location>
        <begin position="376"/>
        <end position="381"/>
    </location>
</feature>
<feature type="helix" evidence="2">
    <location>
        <begin position="392"/>
        <end position="395"/>
    </location>
</feature>
<feature type="strand" evidence="2">
    <location>
        <begin position="403"/>
        <end position="408"/>
    </location>
</feature>
<feature type="turn" evidence="2">
    <location>
        <begin position="411"/>
        <end position="413"/>
    </location>
</feature>
<feature type="helix" evidence="2">
    <location>
        <begin position="414"/>
        <end position="418"/>
    </location>
</feature>
<feature type="strand" evidence="2">
    <location>
        <begin position="423"/>
        <end position="427"/>
    </location>
</feature>
<feature type="helix" evidence="2">
    <location>
        <begin position="429"/>
        <end position="431"/>
    </location>
</feature>
<feature type="strand" evidence="2">
    <location>
        <begin position="432"/>
        <end position="434"/>
    </location>
</feature>
<feature type="helix" evidence="2">
    <location>
        <begin position="440"/>
        <end position="451"/>
    </location>
</feature>
<sequence length="453" mass="49492">MMQTVLAKIVADKAIWVEARKQQQPLASFQNEVQPSTRHFYDALQGARTAFILECKKASPSKGVIRDDFDPARIAAIYKHYASAISVLTDEKYFQGSFNFLPIVSQIAPQPILCKDFIIDPYQIYLARYYQADACLLMLSVLDDDQYRQLAAVAHSLEMGVLTEVSNEEEQERAIALGAKVVGINNRDLRDLSIDLNRTRELAPKLGHNVTVISESGINTYAQVRELSHFANGFLIGSALMAHDDLHAAVRRVLLGENKVCGLTRGQDAKAAYDAGAIYGGLIFVATSPRCVNVEQAQEVMAAAPLQYVGVFRNHDIADVVDKAKVLSLAAVQLHGNEEQLYIDTLREALPAHVAIWKALSVGETLPAREFQHVDKYVLDNGQGGSGQRFDWSLLNGQSLGNVLLAGGLGADNCVEAAQTGCAGLDFNSAVESQPGIKDARLLASVFQTLRAY</sequence>
<gene>
    <name type="primary">trpC</name>
    <name type="synonym">trpF</name>
    <name type="ordered locus">b1262</name>
    <name type="ordered locus">JW1254</name>
</gene>
<evidence type="ECO:0000305" key="1"/>
<evidence type="ECO:0007829" key="2">
    <source>
        <dbReference type="PDB" id="1PII"/>
    </source>
</evidence>
<evidence type="ECO:0007829" key="3">
    <source>
        <dbReference type="PDB" id="2KZH"/>
    </source>
</evidence>
<protein>
    <recommendedName>
        <fullName>Tryptophan biosynthesis protein TrpCF</fullName>
    </recommendedName>
    <domain>
        <recommendedName>
            <fullName>Indole-3-glycerol phosphate synthase</fullName>
            <shortName>IGPS</shortName>
            <ecNumber>4.1.1.48</ecNumber>
        </recommendedName>
    </domain>
    <domain>
        <recommendedName>
            <fullName>N-(5'-phospho-ribosyl)anthranilate isomerase</fullName>
            <shortName>PRAI</shortName>
            <ecNumber>5.3.1.24</ecNumber>
        </recommendedName>
    </domain>
</protein>
<comment type="function">
    <text>Bifunctional enzyme that catalyzes two sequential steps of tryptophan biosynthetic pathway. The first reaction is catalyzed by the isomerase, coded by the TrpF domain; the second reaction is catalyzed by the synthase, coded by the TrpC domain.</text>
</comment>
<comment type="catalytic activity">
    <reaction>
        <text>N-(5-phospho-beta-D-ribosyl)anthranilate = 1-(2-carboxyphenylamino)-1-deoxy-D-ribulose 5-phosphate</text>
        <dbReference type="Rhea" id="RHEA:21540"/>
        <dbReference type="ChEBI" id="CHEBI:18277"/>
        <dbReference type="ChEBI" id="CHEBI:58613"/>
        <dbReference type="EC" id="5.3.1.24"/>
    </reaction>
</comment>
<comment type="catalytic activity">
    <reaction>
        <text>1-(2-carboxyphenylamino)-1-deoxy-D-ribulose 5-phosphate + H(+) = (1S,2R)-1-C-(indol-3-yl)glycerol 3-phosphate + CO2 + H2O</text>
        <dbReference type="Rhea" id="RHEA:23476"/>
        <dbReference type="ChEBI" id="CHEBI:15377"/>
        <dbReference type="ChEBI" id="CHEBI:15378"/>
        <dbReference type="ChEBI" id="CHEBI:16526"/>
        <dbReference type="ChEBI" id="CHEBI:58613"/>
        <dbReference type="ChEBI" id="CHEBI:58866"/>
        <dbReference type="EC" id="4.1.1.48"/>
    </reaction>
</comment>
<comment type="pathway">
    <text>Amino-acid biosynthesis; L-tryptophan biosynthesis; L-tryptophan from chorismate: step 3/5.</text>
</comment>
<comment type="pathway">
    <text>Amino-acid biosynthesis; L-tryptophan biosynthesis; L-tryptophan from chorismate: step 4/5.</text>
</comment>
<comment type="subunit">
    <text>Monomer.</text>
</comment>
<comment type="similarity">
    <text evidence="1">In the N-terminal section; belongs to the TrpC family.</text>
</comment>
<comment type="similarity">
    <text evidence="1">In the C-terminal section; belongs to the TrpF family.</text>
</comment>